<protein>
    <recommendedName>
        <fullName evidence="1">Protein translocase subunit SecA</fullName>
        <ecNumber evidence="1">7.4.2.8</ecNumber>
    </recommendedName>
</protein>
<keyword id="KW-0067">ATP-binding</keyword>
<keyword id="KW-0997">Cell inner membrane</keyword>
<keyword id="KW-1003">Cell membrane</keyword>
<keyword id="KW-0963">Cytoplasm</keyword>
<keyword id="KW-0472">Membrane</keyword>
<keyword id="KW-0479">Metal-binding</keyword>
<keyword id="KW-0547">Nucleotide-binding</keyword>
<keyword id="KW-0653">Protein transport</keyword>
<keyword id="KW-1278">Translocase</keyword>
<keyword id="KW-0811">Translocation</keyword>
<keyword id="KW-0813">Transport</keyword>
<keyword id="KW-0862">Zinc</keyword>
<sequence>MLIKLLTKVFGSRNDRTLRRMRKAVSLINAMEPEMEKLSDDELKAKTNEFRARIEKGESVESLIPEAFAVVREASKRVFGMRHFDVQLLGGMVLNDRCIAEMRTGEGKTLTATLPAYLNALSGKGVHVVTVNDYLAQRDAENNRPLFEFLGMSVGINLPGMPAPAKREAYAADITYGTNNEYGFDYLRDNMAFSPEERVQRKLHYALVDEVDSILIDEARTPLIISGPAEDSSEMYKKVNKIIPHLIRQEKEDSDTFQGEGHFSVDEKARQVNLTERGLVLIEELLVQEGIMDEGESLYSPGNIMLMHHVTAALRAHALFTRDVDYIVKDGEVIIVDEHTGRTMQGRRWSDGLHQAVEAKEGVEIQNENQTLASITFQNYFRLYEKLAGMTGTADTEAFEFSSIYKLDTVVVPTNRPMIRKDLPDLVYMTEAEKIQAIIEDIKERTANGQPVLVGTISIEKSEVVSRELTKAGIKHNVLNAKFHANEAGIVAQAGYPAAVTIATNMAGRGTDIMLGGSWQAEVAALEAPTEEQIAQIKADWQVRHDAVLAAGGLHIIGTERHESRRIDNQLRGRSGRQGDPGSSRFYLSMEDALMRIFASDRVSGMMRKLGMKPGEAIEHPWVTKAIANAQRKVESRNFDIRKQLLEYDDVANDQRRAIYTQRNELLDVSDVSDTINSIREDVFKATIDAYIPPQSLEEMWDIPGLQERLKNDFDLEMPIAEWLDKEPELHEETLRERILAQSIEVYQRKEEVVGAEMMRHFEKGVMLQTLDSLWKEHLAAMDYLRQGIHLRGYAQKDPKQEYKRESFAMFAAMLESLKYEVISTLSKVQVRMPEEVEAMEMQRREEAERLAQMQQLSHQDDDAAVAADLAAQTGERKIGRNDPCPCGSGKKYKQCHGRLS</sequence>
<evidence type="ECO:0000255" key="1">
    <source>
        <dbReference type="HAMAP-Rule" id="MF_01382"/>
    </source>
</evidence>
<organism>
    <name type="scientific">Salmonella newport (strain SL254)</name>
    <dbReference type="NCBI Taxonomy" id="423368"/>
    <lineage>
        <taxon>Bacteria</taxon>
        <taxon>Pseudomonadati</taxon>
        <taxon>Pseudomonadota</taxon>
        <taxon>Gammaproteobacteria</taxon>
        <taxon>Enterobacterales</taxon>
        <taxon>Enterobacteriaceae</taxon>
        <taxon>Salmonella</taxon>
    </lineage>
</organism>
<comment type="function">
    <text evidence="1">Part of the Sec protein translocase complex. Interacts with the SecYEG preprotein conducting channel. Has a central role in coupling the hydrolysis of ATP to the transfer of proteins into and across the cell membrane, serving both as a receptor for the preprotein-SecB complex and as an ATP-driven molecular motor driving the stepwise translocation of polypeptide chains across the membrane.</text>
</comment>
<comment type="catalytic activity">
    <reaction evidence="1">
        <text>ATP + H2O + cellular proteinSide 1 = ADP + phosphate + cellular proteinSide 2.</text>
        <dbReference type="EC" id="7.4.2.8"/>
    </reaction>
</comment>
<comment type="cofactor">
    <cofactor evidence="1">
        <name>Zn(2+)</name>
        <dbReference type="ChEBI" id="CHEBI:29105"/>
    </cofactor>
    <text evidence="1">May bind 1 zinc ion per subunit.</text>
</comment>
<comment type="subunit">
    <text evidence="1">Monomer and homodimer. Part of the essential Sec protein translocation apparatus which comprises SecA, SecYEG and auxiliary proteins SecDF-YajC and YidC.</text>
</comment>
<comment type="subcellular location">
    <subcellularLocation>
        <location evidence="1">Cell inner membrane</location>
        <topology evidence="1">Peripheral membrane protein</topology>
        <orientation evidence="1">Cytoplasmic side</orientation>
    </subcellularLocation>
    <subcellularLocation>
        <location evidence="1">Cytoplasm</location>
    </subcellularLocation>
    <text evidence="1">Distribution is 50-50.</text>
</comment>
<comment type="induction">
    <text evidence="1">Repressed under conditions of excess protein secretion capacity and derepressed when protein secretion becomes limiting. This is regulated by SecM.</text>
</comment>
<comment type="similarity">
    <text evidence="1">Belongs to the SecA family.</text>
</comment>
<gene>
    <name evidence="1" type="primary">secA</name>
    <name type="ordered locus">SNSL254_A0148</name>
</gene>
<name>SECA_SALNS</name>
<feature type="chain" id="PRO_1000145058" description="Protein translocase subunit SecA">
    <location>
        <begin position="1"/>
        <end position="901"/>
    </location>
</feature>
<feature type="binding site" evidence="1">
    <location>
        <position position="87"/>
    </location>
    <ligand>
        <name>ATP</name>
        <dbReference type="ChEBI" id="CHEBI:30616"/>
    </ligand>
</feature>
<feature type="binding site" evidence="1">
    <location>
        <begin position="105"/>
        <end position="109"/>
    </location>
    <ligand>
        <name>ATP</name>
        <dbReference type="ChEBI" id="CHEBI:30616"/>
    </ligand>
</feature>
<feature type="binding site" evidence="1">
    <location>
        <position position="512"/>
    </location>
    <ligand>
        <name>ATP</name>
        <dbReference type="ChEBI" id="CHEBI:30616"/>
    </ligand>
</feature>
<feature type="binding site" evidence="1">
    <location>
        <position position="885"/>
    </location>
    <ligand>
        <name>Zn(2+)</name>
        <dbReference type="ChEBI" id="CHEBI:29105"/>
    </ligand>
</feature>
<feature type="binding site" evidence="1">
    <location>
        <position position="887"/>
    </location>
    <ligand>
        <name>Zn(2+)</name>
        <dbReference type="ChEBI" id="CHEBI:29105"/>
    </ligand>
</feature>
<feature type="binding site" evidence="1">
    <location>
        <position position="896"/>
    </location>
    <ligand>
        <name>Zn(2+)</name>
        <dbReference type="ChEBI" id="CHEBI:29105"/>
    </ligand>
</feature>
<feature type="binding site" evidence="1">
    <location>
        <position position="897"/>
    </location>
    <ligand>
        <name>Zn(2+)</name>
        <dbReference type="ChEBI" id="CHEBI:29105"/>
    </ligand>
</feature>
<dbReference type="EC" id="7.4.2.8" evidence="1"/>
<dbReference type="EMBL" id="CP001113">
    <property type="protein sequence ID" value="ACF61968.1"/>
    <property type="molecule type" value="Genomic_DNA"/>
</dbReference>
<dbReference type="RefSeq" id="WP_000905756.1">
    <property type="nucleotide sequence ID" value="NZ_CCMR01000003.1"/>
</dbReference>
<dbReference type="SMR" id="B4SU57"/>
<dbReference type="KEGG" id="see:SNSL254_A0148"/>
<dbReference type="HOGENOM" id="CLU_005314_3_0_6"/>
<dbReference type="Proteomes" id="UP000008824">
    <property type="component" value="Chromosome"/>
</dbReference>
<dbReference type="GO" id="GO:0031522">
    <property type="term" value="C:cell envelope Sec protein transport complex"/>
    <property type="evidence" value="ECO:0007669"/>
    <property type="project" value="TreeGrafter"/>
</dbReference>
<dbReference type="GO" id="GO:0005829">
    <property type="term" value="C:cytosol"/>
    <property type="evidence" value="ECO:0007669"/>
    <property type="project" value="TreeGrafter"/>
</dbReference>
<dbReference type="GO" id="GO:0005886">
    <property type="term" value="C:plasma membrane"/>
    <property type="evidence" value="ECO:0007669"/>
    <property type="project" value="UniProtKB-SubCell"/>
</dbReference>
<dbReference type="GO" id="GO:0005524">
    <property type="term" value="F:ATP binding"/>
    <property type="evidence" value="ECO:0007669"/>
    <property type="project" value="UniProtKB-UniRule"/>
</dbReference>
<dbReference type="GO" id="GO:0046872">
    <property type="term" value="F:metal ion binding"/>
    <property type="evidence" value="ECO:0007669"/>
    <property type="project" value="UniProtKB-KW"/>
</dbReference>
<dbReference type="GO" id="GO:0008564">
    <property type="term" value="F:protein-exporting ATPase activity"/>
    <property type="evidence" value="ECO:0007669"/>
    <property type="project" value="UniProtKB-EC"/>
</dbReference>
<dbReference type="GO" id="GO:0065002">
    <property type="term" value="P:intracellular protein transmembrane transport"/>
    <property type="evidence" value="ECO:0007669"/>
    <property type="project" value="UniProtKB-UniRule"/>
</dbReference>
<dbReference type="GO" id="GO:0017038">
    <property type="term" value="P:protein import"/>
    <property type="evidence" value="ECO:0007669"/>
    <property type="project" value="InterPro"/>
</dbReference>
<dbReference type="GO" id="GO:0006605">
    <property type="term" value="P:protein targeting"/>
    <property type="evidence" value="ECO:0007669"/>
    <property type="project" value="UniProtKB-UniRule"/>
</dbReference>
<dbReference type="GO" id="GO:0043952">
    <property type="term" value="P:protein transport by the Sec complex"/>
    <property type="evidence" value="ECO:0007669"/>
    <property type="project" value="TreeGrafter"/>
</dbReference>
<dbReference type="CDD" id="cd17928">
    <property type="entry name" value="DEXDc_SecA"/>
    <property type="match status" value="1"/>
</dbReference>
<dbReference type="CDD" id="cd18803">
    <property type="entry name" value="SF2_C_secA"/>
    <property type="match status" value="1"/>
</dbReference>
<dbReference type="FunFam" id="1.10.3060.10:FF:000001">
    <property type="entry name" value="Preprotein translocase subunit SecA"/>
    <property type="match status" value="1"/>
</dbReference>
<dbReference type="FunFam" id="3.40.50.300:FF:000081">
    <property type="entry name" value="Preprotein translocase subunit SecA"/>
    <property type="match status" value="1"/>
</dbReference>
<dbReference type="FunFam" id="3.40.50.300:FF:000113">
    <property type="entry name" value="Preprotein translocase subunit SecA"/>
    <property type="match status" value="1"/>
</dbReference>
<dbReference type="FunFam" id="3.90.1440.10:FF:000001">
    <property type="entry name" value="Preprotein translocase subunit SecA"/>
    <property type="match status" value="1"/>
</dbReference>
<dbReference type="Gene3D" id="1.10.3060.10">
    <property type="entry name" value="Helical scaffold and wing domains of SecA"/>
    <property type="match status" value="1"/>
</dbReference>
<dbReference type="Gene3D" id="3.40.50.300">
    <property type="entry name" value="P-loop containing nucleotide triphosphate hydrolases"/>
    <property type="match status" value="2"/>
</dbReference>
<dbReference type="Gene3D" id="3.90.1440.10">
    <property type="entry name" value="SecA, preprotein cross-linking domain"/>
    <property type="match status" value="1"/>
</dbReference>
<dbReference type="HAMAP" id="MF_01382">
    <property type="entry name" value="SecA"/>
    <property type="match status" value="1"/>
</dbReference>
<dbReference type="InterPro" id="IPR014001">
    <property type="entry name" value="Helicase_ATP-bd"/>
</dbReference>
<dbReference type="InterPro" id="IPR027417">
    <property type="entry name" value="P-loop_NTPase"/>
</dbReference>
<dbReference type="InterPro" id="IPR004027">
    <property type="entry name" value="SEC_C_motif"/>
</dbReference>
<dbReference type="InterPro" id="IPR000185">
    <property type="entry name" value="SecA"/>
</dbReference>
<dbReference type="InterPro" id="IPR020937">
    <property type="entry name" value="SecA_CS"/>
</dbReference>
<dbReference type="InterPro" id="IPR011115">
    <property type="entry name" value="SecA_DEAD"/>
</dbReference>
<dbReference type="InterPro" id="IPR014018">
    <property type="entry name" value="SecA_motor_DEAD"/>
</dbReference>
<dbReference type="InterPro" id="IPR011130">
    <property type="entry name" value="SecA_preprotein_X-link_dom"/>
</dbReference>
<dbReference type="InterPro" id="IPR044722">
    <property type="entry name" value="SecA_SF2_C"/>
</dbReference>
<dbReference type="InterPro" id="IPR011116">
    <property type="entry name" value="SecA_Wing/Scaffold"/>
</dbReference>
<dbReference type="InterPro" id="IPR036266">
    <property type="entry name" value="SecA_Wing/Scaffold_sf"/>
</dbReference>
<dbReference type="InterPro" id="IPR036670">
    <property type="entry name" value="SecA_X-link_sf"/>
</dbReference>
<dbReference type="NCBIfam" id="NF009538">
    <property type="entry name" value="PRK12904.1"/>
    <property type="match status" value="1"/>
</dbReference>
<dbReference type="NCBIfam" id="TIGR00963">
    <property type="entry name" value="secA"/>
    <property type="match status" value="1"/>
</dbReference>
<dbReference type="PANTHER" id="PTHR30612:SF0">
    <property type="entry name" value="CHLOROPLAST PROTEIN-TRANSPORTING ATPASE"/>
    <property type="match status" value="1"/>
</dbReference>
<dbReference type="PANTHER" id="PTHR30612">
    <property type="entry name" value="SECA INNER MEMBRANE COMPONENT OF SEC PROTEIN SECRETION SYSTEM"/>
    <property type="match status" value="1"/>
</dbReference>
<dbReference type="Pfam" id="PF21090">
    <property type="entry name" value="P-loop_SecA"/>
    <property type="match status" value="1"/>
</dbReference>
<dbReference type="Pfam" id="PF02810">
    <property type="entry name" value="SEC-C"/>
    <property type="match status" value="1"/>
</dbReference>
<dbReference type="Pfam" id="PF07517">
    <property type="entry name" value="SecA_DEAD"/>
    <property type="match status" value="1"/>
</dbReference>
<dbReference type="Pfam" id="PF01043">
    <property type="entry name" value="SecA_PP_bind"/>
    <property type="match status" value="1"/>
</dbReference>
<dbReference type="Pfam" id="PF07516">
    <property type="entry name" value="SecA_SW"/>
    <property type="match status" value="1"/>
</dbReference>
<dbReference type="PRINTS" id="PR00906">
    <property type="entry name" value="SECA"/>
</dbReference>
<dbReference type="SMART" id="SM00957">
    <property type="entry name" value="SecA_DEAD"/>
    <property type="match status" value="1"/>
</dbReference>
<dbReference type="SMART" id="SM00958">
    <property type="entry name" value="SecA_PP_bind"/>
    <property type="match status" value="1"/>
</dbReference>
<dbReference type="SUPFAM" id="SSF81886">
    <property type="entry name" value="Helical scaffold and wing domains of SecA"/>
    <property type="match status" value="1"/>
</dbReference>
<dbReference type="SUPFAM" id="SSF52540">
    <property type="entry name" value="P-loop containing nucleoside triphosphate hydrolases"/>
    <property type="match status" value="2"/>
</dbReference>
<dbReference type="SUPFAM" id="SSF81767">
    <property type="entry name" value="Pre-protein crosslinking domain of SecA"/>
    <property type="match status" value="1"/>
</dbReference>
<dbReference type="PROSITE" id="PS01312">
    <property type="entry name" value="SECA"/>
    <property type="match status" value="1"/>
</dbReference>
<dbReference type="PROSITE" id="PS51196">
    <property type="entry name" value="SECA_MOTOR_DEAD"/>
    <property type="match status" value="1"/>
</dbReference>
<reference key="1">
    <citation type="journal article" date="2011" name="J. Bacteriol.">
        <title>Comparative genomics of 28 Salmonella enterica isolates: evidence for CRISPR-mediated adaptive sublineage evolution.</title>
        <authorList>
            <person name="Fricke W.F."/>
            <person name="Mammel M.K."/>
            <person name="McDermott P.F."/>
            <person name="Tartera C."/>
            <person name="White D.G."/>
            <person name="Leclerc J.E."/>
            <person name="Ravel J."/>
            <person name="Cebula T.A."/>
        </authorList>
    </citation>
    <scope>NUCLEOTIDE SEQUENCE [LARGE SCALE GENOMIC DNA]</scope>
    <source>
        <strain>SL254</strain>
    </source>
</reference>
<proteinExistence type="inferred from homology"/>
<accession>B4SU57</accession>